<evidence type="ECO:0000250" key="1"/>
<evidence type="ECO:0000255" key="2"/>
<evidence type="ECO:0000255" key="3">
    <source>
        <dbReference type="PROSITE-ProRule" id="PRU00199"/>
    </source>
</evidence>
<evidence type="ECO:0000256" key="4">
    <source>
        <dbReference type="SAM" id="MobiDB-lite"/>
    </source>
</evidence>
<evidence type="ECO:0000305" key="5"/>
<sequence length="1220" mass="135544">MASDPRDPGPAGGVFGDLPPSYTRSPPPVNSDLLRRPSYCHAAFALKQISKGKAVGQKAPLWIRARFQAFLFSLGCHIQRHCGKVLFIGLLVFGALSVGLRVAAIETDIEKLWVEAGSRVSKELRYTKEKQGEESVFTSQMLIQTPKQEGTNILTQEALLLHLEAALSASKVQVSLYGKSWDLNKICFKSGVPIIENVMIERMIDKLFPCMIVTPLDCFWEGSKLQGGSAYLPGMPDIQWMNLDPLKLMEELSQFTSLEGFREMLDKAQVGHAYMNRPCLDPSDTDCPHSAPNKDPWQVPNIAAELQGGCHGFSKKFMHWQEELILGERVKDSQNALQSAEALQTMFLLMSPKQLYEHFKDDYEIHDINWNEDKATAILESWQRKFVEVVHGSIPQNSSSNVYAFSTTTLNDIMKSFSDVSVIRVAGGYLLMLAYACVTMLRWDCAKSQGAVGLAGVLLVALSVAAGLGLCSLLGLSFNAATTQVLPSLALGIGVDDMFLLGHSFTETRSNIPFKERTGDCLRRTGTSVALTSVNNMIAFFMAALVPIPALRAFSLQAAVVVVFNFAMALLIFPAILSLDLHRREDKRLDILCCFYSPCSSRVIQIQPQELSDANDNHQRAPATPTYTGSTITTSTHITTTVQAFTQCDAAGQHIVTILPPTSQISTTPPSMVLSTPTPTTDPYGSQVFTTSSSTRDLLAQVEEPKEGRECVPLPFFRWNLSSFAREKYAPLLLKPETKTVVVVVFVALLSLSLYGTTMVHDGLYLTDIVPRDTQEYEFITAQFKYFSFYNMYLVTMDGFDYARSQRQLLQLHNAFNSVKYVVKDGNHKLPRMWLHYFQDWLKGLQATFDADWEAGKITYDSYRNGTEDGALAYKPLIQTGSKKEPFNYSQLTSRRLVDGDGLIPPEVFYIYLTVWVSNDPLGYAASQANFYPHPREWIHDKYDTTGENLRIPAAEPLEFAQFPFYLNGLRQASDFIEAIESVRTICEEFMRQGIKNYPNGYPFLFWEQYIGLRHWFLLSISVVLACTFLVCAILLLNPWTAGVIVFILPMMTVELFGIMGLIGIKLSAIPVVILIASVGIGVEFTVHIALGFLTAIGDRNTRSAVAMEHMFAPVIDGAISTLLGVLMLAGSEFDFIMRYFFAVLAILTLLGILNGLVLLPVLLSLMGPPAEVVPANNANHLQSPSPEPMPPPMNHHGYYAGHIPKASHQAFSETSDSEY</sequence>
<reference key="1">
    <citation type="journal article" date="1996" name="Development">
        <title>Spatial regulation of the zebrafish patched homologue reflects the roles of sonic hedgehog and protein kinase A in neural tube and somite patterning.</title>
        <authorList>
            <person name="Concordet J.-P."/>
            <person name="Lewis K.E."/>
            <person name="Moore J.W."/>
            <person name="Goodrich L.V."/>
            <person name="Johnson R.L."/>
            <person name="Scott M.P."/>
            <person name="Ingham P.W."/>
        </authorList>
    </citation>
    <scope>NUCLEOTIDE SEQUENCE [MRNA]</scope>
    <source>
        <tissue>Embryo</tissue>
    </source>
</reference>
<accession>Q98864</accession>
<protein>
    <recommendedName>
        <fullName>Protein patched homolog 1</fullName>
        <shortName>PTC1</shortName>
        <shortName>Patched 1</shortName>
    </recommendedName>
</protein>
<dbReference type="EMBL" id="X98883">
    <property type="protein sequence ID" value="CAA67386.1"/>
    <property type="molecule type" value="mRNA"/>
</dbReference>
<dbReference type="PIR" id="T18291">
    <property type="entry name" value="T18291"/>
</dbReference>
<dbReference type="SMR" id="Q98864"/>
<dbReference type="FunCoup" id="Q98864">
    <property type="interactions" value="597"/>
</dbReference>
<dbReference type="STRING" id="7955.ENSDARP00000071771"/>
<dbReference type="GlyCosmos" id="Q98864">
    <property type="glycosylation" value="3 sites, No reported glycans"/>
</dbReference>
<dbReference type="PaxDb" id="7955-ENSDARP00000071771"/>
<dbReference type="AGR" id="ZFIN:ZDB-GENE-980526-44"/>
<dbReference type="ZFIN" id="ZDB-GENE-980526-44">
    <property type="gene designation" value="ptch2"/>
</dbReference>
<dbReference type="eggNOG" id="KOG1935">
    <property type="taxonomic scope" value="Eukaryota"/>
</dbReference>
<dbReference type="InParanoid" id="Q98864"/>
<dbReference type="PhylomeDB" id="Q98864"/>
<dbReference type="SignaLink" id="Q98864"/>
<dbReference type="PRO" id="PR:Q98864"/>
<dbReference type="Proteomes" id="UP000000437">
    <property type="component" value="Unplaced"/>
</dbReference>
<dbReference type="GO" id="GO:0005886">
    <property type="term" value="C:plasma membrane"/>
    <property type="evidence" value="ECO:0000318"/>
    <property type="project" value="GO_Central"/>
</dbReference>
<dbReference type="GO" id="GO:0097108">
    <property type="term" value="F:hedgehog family protein binding"/>
    <property type="evidence" value="ECO:0000318"/>
    <property type="project" value="GO_Central"/>
</dbReference>
<dbReference type="GO" id="GO:0008158">
    <property type="term" value="F:hedgehog receptor activity"/>
    <property type="evidence" value="ECO:0000318"/>
    <property type="project" value="GO_Central"/>
</dbReference>
<dbReference type="GO" id="GO:0005119">
    <property type="term" value="F:smoothened binding"/>
    <property type="evidence" value="ECO:0000318"/>
    <property type="project" value="GO_Central"/>
</dbReference>
<dbReference type="GO" id="GO:0043010">
    <property type="term" value="P:camera-type eye development"/>
    <property type="evidence" value="ECO:0000315"/>
    <property type="project" value="ZFIN"/>
</dbReference>
<dbReference type="GO" id="GO:0010002">
    <property type="term" value="P:cardioblast differentiation"/>
    <property type="evidence" value="ECO:0000316"/>
    <property type="project" value="ZFIN"/>
</dbReference>
<dbReference type="GO" id="GO:0048635">
    <property type="term" value="P:negative regulation of muscle organ development"/>
    <property type="evidence" value="ECO:0000316"/>
    <property type="project" value="ZFIN"/>
</dbReference>
<dbReference type="GO" id="GO:0045879">
    <property type="term" value="P:negative regulation of smoothened signaling pathway"/>
    <property type="evidence" value="ECO:0000315"/>
    <property type="project" value="ZFIN"/>
</dbReference>
<dbReference type="GO" id="GO:0001649">
    <property type="term" value="P:osteoblast differentiation"/>
    <property type="evidence" value="ECO:0000315"/>
    <property type="project" value="ZFIN"/>
</dbReference>
<dbReference type="GO" id="GO:0009954">
    <property type="term" value="P:proximal/distal pattern formation"/>
    <property type="evidence" value="ECO:0000315"/>
    <property type="project" value="ZFIN"/>
</dbReference>
<dbReference type="GO" id="GO:0031290">
    <property type="term" value="P:retinal ganglion cell axon guidance"/>
    <property type="evidence" value="ECO:0000315"/>
    <property type="project" value="ZFIN"/>
</dbReference>
<dbReference type="FunFam" id="1.20.1640.10:FF:000007">
    <property type="entry name" value="Protein patched homolog 1"/>
    <property type="match status" value="1"/>
</dbReference>
<dbReference type="FunFam" id="1.20.1640.10:FF:000003">
    <property type="entry name" value="protein patched homolog 1"/>
    <property type="match status" value="1"/>
</dbReference>
<dbReference type="Gene3D" id="1.20.1640.10">
    <property type="entry name" value="Multidrug efflux transporter AcrB transmembrane domain"/>
    <property type="match status" value="2"/>
</dbReference>
<dbReference type="InterPro" id="IPR053958">
    <property type="entry name" value="HMGCR/SNAP/NPC1-like_SSD"/>
</dbReference>
<dbReference type="InterPro" id="IPR000731">
    <property type="entry name" value="SSD"/>
</dbReference>
<dbReference type="InterPro" id="IPR004766">
    <property type="entry name" value="TM_rcpt_patched"/>
</dbReference>
<dbReference type="NCBIfam" id="TIGR00918">
    <property type="entry name" value="2A060602"/>
    <property type="match status" value="1"/>
</dbReference>
<dbReference type="PANTHER" id="PTHR46022">
    <property type="entry name" value="PROTEIN PATCHED"/>
    <property type="match status" value="1"/>
</dbReference>
<dbReference type="PANTHER" id="PTHR46022:SF3">
    <property type="entry name" value="PROTEIN PATCHED HOMOLOG 2"/>
    <property type="match status" value="1"/>
</dbReference>
<dbReference type="Pfam" id="PF12349">
    <property type="entry name" value="Sterol-sensing"/>
    <property type="match status" value="1"/>
</dbReference>
<dbReference type="SUPFAM" id="SSF82866">
    <property type="entry name" value="Multidrug efflux transporter AcrB transmembrane domain"/>
    <property type="match status" value="2"/>
</dbReference>
<dbReference type="PROSITE" id="PS50156">
    <property type="entry name" value="SSD"/>
    <property type="match status" value="1"/>
</dbReference>
<comment type="function">
    <text evidence="1">Acts as a receptor for sonic hedgehog (SHH), indian hedgehog (IHH) and desert hedgehog (DHH). Associates with the smoothened protein (SMO) to transduce the hedgehog's proteins signal (By similarity).</text>
</comment>
<comment type="subcellular location">
    <subcellularLocation>
        <location>Membrane</location>
        <topology>Multi-pass membrane protein</topology>
    </subcellularLocation>
</comment>
<comment type="tissue specificity">
    <text>Detected in embryonic presomitic mesoderm, neuroectoderm, tissue surrounding the notochord, ventral neural tube.</text>
</comment>
<comment type="developmental stage">
    <text>At all stages, expression corresponds to the localization of SHH. First detected during gastrulation. By 36 hours, PTC1 appears in the first branchial arch and the posterior mesenchyme of the fin bud; by 48 hours, in the hindbrain and foregut.</text>
</comment>
<comment type="induction">
    <text>Activated by Sonic hedgehog.</text>
</comment>
<comment type="PTM">
    <text evidence="1">Glycosylation is necessary for SHH binding.</text>
</comment>
<comment type="similarity">
    <text evidence="5">Belongs to the patched family.</text>
</comment>
<proteinExistence type="evidence at transcript level"/>
<feature type="chain" id="PRO_0000205967" description="Protein patched homolog 1">
    <location>
        <begin position="1"/>
        <end position="1220"/>
    </location>
</feature>
<feature type="topological domain" description="Cytoplasmic" evidence="2">
    <location>
        <begin position="1"/>
        <end position="84"/>
    </location>
</feature>
<feature type="transmembrane region" description="Helical" evidence="2">
    <location>
        <begin position="85"/>
        <end position="105"/>
    </location>
</feature>
<feature type="topological domain" description="Extracellular" evidence="2">
    <location>
        <begin position="106"/>
        <end position="419"/>
    </location>
</feature>
<feature type="transmembrane region" description="Helical" evidence="2">
    <location>
        <begin position="420"/>
        <end position="440"/>
    </location>
</feature>
<feature type="topological domain" description="Cytoplasmic" evidence="2">
    <location>
        <begin position="441"/>
        <end position="449"/>
    </location>
</feature>
<feature type="transmembrane region" description="Helical" evidence="2">
    <location>
        <begin position="450"/>
        <end position="470"/>
    </location>
</feature>
<feature type="topological domain" description="Extracellular" evidence="2">
    <location>
        <begin position="471"/>
        <end position="484"/>
    </location>
</feature>
<feature type="transmembrane region" description="Helical" evidence="2">
    <location>
        <begin position="485"/>
        <end position="505"/>
    </location>
</feature>
<feature type="topological domain" description="Cytoplasmic" evidence="2">
    <location>
        <begin position="506"/>
        <end position="528"/>
    </location>
</feature>
<feature type="transmembrane region" description="Helical" evidence="2">
    <location>
        <begin position="529"/>
        <end position="549"/>
    </location>
</feature>
<feature type="topological domain" description="Extracellular" evidence="2">
    <location>
        <begin position="550"/>
        <end position="558"/>
    </location>
</feature>
<feature type="transmembrane region" description="Helical" evidence="2">
    <location>
        <begin position="559"/>
        <end position="579"/>
    </location>
</feature>
<feature type="topological domain" description="Cytoplasmic" evidence="2">
    <location>
        <begin position="580"/>
        <end position="739"/>
    </location>
</feature>
<feature type="transmembrane region" description="Helical" evidence="2">
    <location>
        <begin position="740"/>
        <end position="760"/>
    </location>
</feature>
<feature type="topological domain" description="Extracellular" evidence="2">
    <location>
        <begin position="761"/>
        <end position="1016"/>
    </location>
</feature>
<feature type="transmembrane region" description="Helical" evidence="2">
    <location>
        <begin position="1017"/>
        <end position="1037"/>
    </location>
</feature>
<feature type="topological domain" description="Cytoplasmic" evidence="2">
    <location>
        <begin position="1038"/>
        <end position="1044"/>
    </location>
</feature>
<feature type="transmembrane region" description="Helical" evidence="2">
    <location>
        <begin position="1045"/>
        <end position="1065"/>
    </location>
</feature>
<feature type="topological domain" description="Extracellular" evidence="2">
    <location>
        <begin position="1066"/>
        <end position="1072"/>
    </location>
</feature>
<feature type="transmembrane region" description="Helical" evidence="2">
    <location>
        <begin position="1073"/>
        <end position="1093"/>
    </location>
</feature>
<feature type="topological domain" description="Cytoplasmic" evidence="2">
    <location>
        <begin position="1094"/>
        <end position="1110"/>
    </location>
</feature>
<feature type="transmembrane region" description="Helical" evidence="2">
    <location>
        <begin position="1111"/>
        <end position="1131"/>
    </location>
</feature>
<feature type="topological domain" description="Extracellular" evidence="2">
    <location>
        <begin position="1132"/>
        <end position="1143"/>
    </location>
</feature>
<feature type="transmembrane region" description="Helical" evidence="2">
    <location>
        <begin position="1144"/>
        <end position="1164"/>
    </location>
</feature>
<feature type="topological domain" description="Cytoplasmic" evidence="2">
    <location>
        <begin position="1165"/>
        <end position="1220"/>
    </location>
</feature>
<feature type="domain" description="SSD" evidence="3">
    <location>
        <begin position="421"/>
        <end position="579"/>
    </location>
</feature>
<feature type="region of interest" description="Disordered" evidence="4">
    <location>
        <begin position="1"/>
        <end position="27"/>
    </location>
</feature>
<feature type="glycosylation site" description="N-linked (GlcNAc...) asparagine" evidence="2">
    <location>
        <position position="397"/>
    </location>
</feature>
<feature type="glycosylation site" description="N-linked (GlcNAc...) asparagine" evidence="2">
    <location>
        <position position="865"/>
    </location>
</feature>
<feature type="glycosylation site" description="N-linked (GlcNAc...) asparagine" evidence="2">
    <location>
        <position position="888"/>
    </location>
</feature>
<organism>
    <name type="scientific">Danio rerio</name>
    <name type="common">Zebrafish</name>
    <name type="synonym">Brachydanio rerio</name>
    <dbReference type="NCBI Taxonomy" id="7955"/>
    <lineage>
        <taxon>Eukaryota</taxon>
        <taxon>Metazoa</taxon>
        <taxon>Chordata</taxon>
        <taxon>Craniata</taxon>
        <taxon>Vertebrata</taxon>
        <taxon>Euteleostomi</taxon>
        <taxon>Actinopterygii</taxon>
        <taxon>Neopterygii</taxon>
        <taxon>Teleostei</taxon>
        <taxon>Ostariophysi</taxon>
        <taxon>Cypriniformes</taxon>
        <taxon>Danionidae</taxon>
        <taxon>Danioninae</taxon>
        <taxon>Danio</taxon>
    </lineage>
</organism>
<gene>
    <name type="primary">ptch1</name>
    <name type="synonym">ptc1</name>
</gene>
<keyword id="KW-0325">Glycoprotein</keyword>
<keyword id="KW-0472">Membrane</keyword>
<keyword id="KW-0675">Receptor</keyword>
<keyword id="KW-1185">Reference proteome</keyword>
<keyword id="KW-0812">Transmembrane</keyword>
<keyword id="KW-1133">Transmembrane helix</keyword>
<name>PTC1_DANRE</name>